<comment type="function">
    <text evidence="1 6">CALR3 capacity for calcium-binding may be absent or much lower than that of CALR (By similarity). During spermatogenesis, may act as a lectin-independent chaperone for specific client proteins such as ADAM3. Required for sperm fertility.</text>
</comment>
<comment type="subunit">
    <text evidence="5">Component of an EIF2 complex at least composed of CELF1/CUGBP1, CALR, CALR3, EIF2S1, EIF2S2, HSP90B1 and HSPA5.</text>
</comment>
<comment type="subcellular location">
    <subcellularLocation>
        <location evidence="1">Endoplasmic reticulum lumen</location>
    </subcellularLocation>
</comment>
<comment type="tissue specificity">
    <text evidence="4 6">Testis specific, absent in mature sperm.</text>
</comment>
<comment type="disruption phenotype">
    <text evidence="6">Defective sperm migration from the uterus into the oviduct and defective binding to the zona pellucida.</text>
</comment>
<comment type="similarity">
    <text evidence="7">Belongs to the calreticulin family.</text>
</comment>
<gene>
    <name type="primary">Calr3</name>
    <name type="synonym">Crt2</name>
</gene>
<protein>
    <recommendedName>
        <fullName>Calreticulin-3</fullName>
    </recommendedName>
    <alternativeName>
        <fullName>Calreticulin-2</fullName>
    </alternativeName>
    <alternativeName>
        <fullName>Calsperin</fullName>
    </alternativeName>
</protein>
<dbReference type="EMBL" id="AK006582">
    <property type="protein sequence ID" value="BAB24660.1"/>
    <property type="molecule type" value="mRNA"/>
</dbReference>
<dbReference type="EMBL" id="AC113182">
    <property type="status" value="NOT_ANNOTATED_CDS"/>
    <property type="molecule type" value="Genomic_DNA"/>
</dbReference>
<dbReference type="EMBL" id="CH466525">
    <property type="protein sequence ID" value="EDL10797.1"/>
    <property type="molecule type" value="Genomic_DNA"/>
</dbReference>
<dbReference type="CCDS" id="CCDS22413.1"/>
<dbReference type="RefSeq" id="NP_082776.2">
    <property type="nucleotide sequence ID" value="NM_028500.3"/>
</dbReference>
<dbReference type="SMR" id="Q9D9Q6"/>
<dbReference type="BioGRID" id="215919">
    <property type="interactions" value="4"/>
</dbReference>
<dbReference type="DIP" id="DIP-60025N"/>
<dbReference type="FunCoup" id="Q9D9Q6">
    <property type="interactions" value="86"/>
</dbReference>
<dbReference type="IntAct" id="Q9D9Q6">
    <property type="interactions" value="2"/>
</dbReference>
<dbReference type="STRING" id="10090.ENSMUSP00000019876"/>
<dbReference type="GlyCosmos" id="Q9D9Q6">
    <property type="glycosylation" value="2 sites, No reported glycans"/>
</dbReference>
<dbReference type="GlyGen" id="Q9D9Q6">
    <property type="glycosylation" value="3 sites, 2 N-linked glycans (2 sites), 1 O-linked glycan (1 site)"/>
</dbReference>
<dbReference type="iPTMnet" id="Q9D9Q6"/>
<dbReference type="PhosphoSitePlus" id="Q9D9Q6"/>
<dbReference type="SwissPalm" id="Q9D9Q6"/>
<dbReference type="PaxDb" id="10090-ENSMUSP00000019876"/>
<dbReference type="PeptideAtlas" id="Q9D9Q6"/>
<dbReference type="ProteomicsDB" id="281761"/>
<dbReference type="Antibodypedia" id="66699">
    <property type="antibodies" value="339 antibodies from 29 providers"/>
</dbReference>
<dbReference type="DNASU" id="73316"/>
<dbReference type="Ensembl" id="ENSMUST00000019876.12">
    <property type="protein sequence ID" value="ENSMUSP00000019876.6"/>
    <property type="gene ID" value="ENSMUSG00000019732.15"/>
</dbReference>
<dbReference type="GeneID" id="73316"/>
<dbReference type="KEGG" id="mmu:73316"/>
<dbReference type="UCSC" id="uc009mfx.1">
    <property type="organism name" value="mouse"/>
</dbReference>
<dbReference type="AGR" id="MGI:1920566"/>
<dbReference type="CTD" id="125972"/>
<dbReference type="MGI" id="MGI:1920566">
    <property type="gene designation" value="Calr3"/>
</dbReference>
<dbReference type="VEuPathDB" id="HostDB:ENSMUSG00000019732"/>
<dbReference type="eggNOG" id="KOG0674">
    <property type="taxonomic scope" value="Eukaryota"/>
</dbReference>
<dbReference type="GeneTree" id="ENSGT00950000182915"/>
<dbReference type="HOGENOM" id="CLU_018224_0_0_1"/>
<dbReference type="InParanoid" id="Q9D9Q6"/>
<dbReference type="OMA" id="HYFNRFH"/>
<dbReference type="OrthoDB" id="1938156at2759"/>
<dbReference type="PhylomeDB" id="Q9D9Q6"/>
<dbReference type="TreeFam" id="TF338438"/>
<dbReference type="BioGRID-ORCS" id="73316">
    <property type="hits" value="1 hit in 79 CRISPR screens"/>
</dbReference>
<dbReference type="ChiTaRS" id="Calr3">
    <property type="organism name" value="mouse"/>
</dbReference>
<dbReference type="PRO" id="PR:Q9D9Q6"/>
<dbReference type="Proteomes" id="UP000000589">
    <property type="component" value="Chromosome 8"/>
</dbReference>
<dbReference type="RNAct" id="Q9D9Q6">
    <property type="molecule type" value="protein"/>
</dbReference>
<dbReference type="Bgee" id="ENSMUSG00000019732">
    <property type="expression patterns" value="Expressed in spermatid and 141 other cell types or tissues"/>
</dbReference>
<dbReference type="ExpressionAtlas" id="Q9D9Q6">
    <property type="expression patterns" value="baseline and differential"/>
</dbReference>
<dbReference type="GO" id="GO:0005788">
    <property type="term" value="C:endoplasmic reticulum lumen"/>
    <property type="evidence" value="ECO:0007669"/>
    <property type="project" value="UniProtKB-SubCell"/>
</dbReference>
<dbReference type="GO" id="GO:0005635">
    <property type="term" value="C:nuclear envelope"/>
    <property type="evidence" value="ECO:0007669"/>
    <property type="project" value="Ensembl"/>
</dbReference>
<dbReference type="GO" id="GO:0005509">
    <property type="term" value="F:calcium ion binding"/>
    <property type="evidence" value="ECO:0007669"/>
    <property type="project" value="InterPro"/>
</dbReference>
<dbReference type="GO" id="GO:0044183">
    <property type="term" value="F:protein folding chaperone"/>
    <property type="evidence" value="ECO:0000315"/>
    <property type="project" value="MGI"/>
</dbReference>
<dbReference type="GO" id="GO:0051082">
    <property type="term" value="F:unfolded protein binding"/>
    <property type="evidence" value="ECO:0007669"/>
    <property type="project" value="InterPro"/>
</dbReference>
<dbReference type="GO" id="GO:0030154">
    <property type="term" value="P:cell differentiation"/>
    <property type="evidence" value="ECO:0007669"/>
    <property type="project" value="UniProtKB-KW"/>
</dbReference>
<dbReference type="GO" id="GO:0007283">
    <property type="term" value="P:spermatogenesis"/>
    <property type="evidence" value="ECO:0007669"/>
    <property type="project" value="UniProtKB-KW"/>
</dbReference>
<dbReference type="FunFam" id="2.60.120.200:FF:000122">
    <property type="entry name" value="Calreticulin 3"/>
    <property type="match status" value="1"/>
</dbReference>
<dbReference type="FunFam" id="2.60.120.200:FF:000339">
    <property type="entry name" value="Calreticulin 3"/>
    <property type="match status" value="1"/>
</dbReference>
<dbReference type="Gene3D" id="2.60.120.200">
    <property type="match status" value="2"/>
</dbReference>
<dbReference type="InterPro" id="IPR001580">
    <property type="entry name" value="Calret/calnex"/>
</dbReference>
<dbReference type="InterPro" id="IPR018124">
    <property type="entry name" value="Calret/calnex_CS"/>
</dbReference>
<dbReference type="InterPro" id="IPR009169">
    <property type="entry name" value="Calreticulin"/>
</dbReference>
<dbReference type="InterPro" id="IPR009033">
    <property type="entry name" value="Calreticulin/calnexin_P_dom_sf"/>
</dbReference>
<dbReference type="InterPro" id="IPR013320">
    <property type="entry name" value="ConA-like_dom_sf"/>
</dbReference>
<dbReference type="PANTHER" id="PTHR11073">
    <property type="entry name" value="CALRETICULIN AND CALNEXIN"/>
    <property type="match status" value="1"/>
</dbReference>
<dbReference type="PANTHER" id="PTHR11073:SF3">
    <property type="entry name" value="CALRETICULIN-3"/>
    <property type="match status" value="1"/>
</dbReference>
<dbReference type="Pfam" id="PF00262">
    <property type="entry name" value="Calreticulin"/>
    <property type="match status" value="1"/>
</dbReference>
<dbReference type="PIRSF" id="PIRSF002356">
    <property type="entry name" value="Calreticulin"/>
    <property type="match status" value="1"/>
</dbReference>
<dbReference type="PRINTS" id="PR00626">
    <property type="entry name" value="CALRETICULIN"/>
</dbReference>
<dbReference type="SUPFAM" id="SSF49899">
    <property type="entry name" value="Concanavalin A-like lectins/glucanases"/>
    <property type="match status" value="1"/>
</dbReference>
<dbReference type="SUPFAM" id="SSF63887">
    <property type="entry name" value="P-domain of calnexin/calreticulin"/>
    <property type="match status" value="1"/>
</dbReference>
<dbReference type="PROSITE" id="PS00803">
    <property type="entry name" value="CALRETICULIN_1"/>
    <property type="match status" value="1"/>
</dbReference>
<dbReference type="PROSITE" id="PS00804">
    <property type="entry name" value="CALRETICULIN_2"/>
    <property type="match status" value="1"/>
</dbReference>
<proteinExistence type="evidence at protein level"/>
<keyword id="KW-0143">Chaperone</keyword>
<keyword id="KW-0221">Differentiation</keyword>
<keyword id="KW-1015">Disulfide bond</keyword>
<keyword id="KW-0256">Endoplasmic reticulum</keyword>
<keyword id="KW-0325">Glycoprotein</keyword>
<keyword id="KW-1185">Reference proteome</keyword>
<keyword id="KW-0677">Repeat</keyword>
<keyword id="KW-0732">Signal</keyword>
<keyword id="KW-0744">Spermatogenesis</keyword>
<name>CALR3_MOUSE</name>
<sequence length="380" mass="44232">MVSARALLWAICVLRVALATVYFQEEFLDGERWRNRWVQSTNDSQFGHFRVSSGKFYGHKEKDKGLQTTQNSRFYAISASFKPFSNKGKTLVIQYTVKHEQKMDCGGGYIKVFPSDLDQKKMNGKSQYYIMFGPDICGFDIKKVHVILYFKNQYHENKKPIRCKVDGFTHLYTLILRPDLSYEVKVDGQSIESGSIEYDWNLTSLRKTEKTSLDSRDWDQVEGSKVQDWEKHFLDAGASKPSDWNSELDGDWLQKPPYEDGLKAEGIDKDVWLHQKMRPAGYLTQYDLSEFENIGAIGLELWQVRSGTIFDNFLITDDEEYAEKFGKATWGETKGPEKEMDAIQAKEEVKKAREEDEEDLLMGKFHRHNHFSRFHRQGEL</sequence>
<accession>Q9D9Q6</accession>
<accession>G5E827</accession>
<evidence type="ECO:0000250" key="1"/>
<evidence type="ECO:0000250" key="2">
    <source>
        <dbReference type="UniProtKB" id="P14211"/>
    </source>
</evidence>
<evidence type="ECO:0000255" key="3"/>
<evidence type="ECO:0000269" key="4">
    <source>
    </source>
</evidence>
<evidence type="ECO:0000269" key="5">
    <source>
    </source>
</evidence>
<evidence type="ECO:0000269" key="6">
    <source>
    </source>
</evidence>
<evidence type="ECO:0000305" key="7"/>
<feature type="signal peptide" evidence="3">
    <location>
        <begin position="1"/>
        <end position="19"/>
    </location>
</feature>
<feature type="chain" id="PRO_0000004179" description="Calreticulin-3">
    <location>
        <begin position="20"/>
        <end position="380"/>
    </location>
</feature>
<feature type="repeat" description="1-1">
    <location>
        <begin position="191"/>
        <end position="202"/>
    </location>
</feature>
<feature type="repeat" description="1-2">
    <location>
        <begin position="209"/>
        <end position="220"/>
    </location>
</feature>
<feature type="repeat" description="1-3">
    <location>
        <begin position="222"/>
        <end position="231"/>
    </location>
</feature>
<feature type="repeat" description="1-4">
    <location>
        <begin position="235"/>
        <end position="246"/>
    </location>
</feature>
<feature type="repeat" description="2-1">
    <location>
        <begin position="250"/>
        <end position="256"/>
    </location>
</feature>
<feature type="repeat" description="2-2">
    <location>
        <begin position="260"/>
        <end position="268"/>
    </location>
</feature>
<feature type="repeat" description="2-3">
    <location>
        <begin position="270"/>
        <end position="280"/>
    </location>
</feature>
<feature type="region of interest" description="N-domain">
    <location>
        <begin position="20"/>
        <end position="197"/>
    </location>
</feature>
<feature type="region of interest" description="4 X approximate repeats">
    <location>
        <begin position="191"/>
        <end position="246"/>
    </location>
</feature>
<feature type="region of interest" description="P-domain">
    <location>
        <begin position="198"/>
        <end position="291"/>
    </location>
</feature>
<feature type="region of interest" description="3 X approximate repeats">
    <location>
        <begin position="250"/>
        <end position="280"/>
    </location>
</feature>
<feature type="region of interest" description="C-domain">
    <location>
        <begin position="292"/>
        <end position="380"/>
    </location>
</feature>
<feature type="short sequence motif" description="Prevents secretion from ER" evidence="3">
    <location>
        <begin position="377"/>
        <end position="380"/>
    </location>
</feature>
<feature type="binding site" evidence="2">
    <location>
        <position position="109"/>
    </location>
    <ligand>
        <name>an alpha-D-glucoside</name>
        <dbReference type="ChEBI" id="CHEBI:22390"/>
    </ligand>
</feature>
<feature type="binding site" evidence="2">
    <location>
        <position position="111"/>
    </location>
    <ligand>
        <name>an alpha-D-glucoside</name>
        <dbReference type="ChEBI" id="CHEBI:22390"/>
    </ligand>
</feature>
<feature type="binding site" evidence="2">
    <location>
        <position position="128"/>
    </location>
    <ligand>
        <name>an alpha-D-glucoside</name>
        <dbReference type="ChEBI" id="CHEBI:22390"/>
    </ligand>
</feature>
<feature type="binding site" evidence="2">
    <location>
        <position position="135"/>
    </location>
    <ligand>
        <name>an alpha-D-glucoside</name>
        <dbReference type="ChEBI" id="CHEBI:22390"/>
    </ligand>
</feature>
<feature type="binding site" evidence="2">
    <location>
        <position position="300"/>
    </location>
    <ligand>
        <name>an alpha-D-glucoside</name>
        <dbReference type="ChEBI" id="CHEBI:22390"/>
    </ligand>
</feature>
<feature type="glycosylation site" description="N-linked (GlcNAc...) asparagine" evidence="3">
    <location>
        <position position="42"/>
    </location>
</feature>
<feature type="glycosylation site" description="N-linked (GlcNAc...) asparagine" evidence="3">
    <location>
        <position position="201"/>
    </location>
</feature>
<feature type="disulfide bond" evidence="1">
    <location>
        <begin position="137"/>
        <end position="163"/>
    </location>
</feature>
<feature type="sequence conflict" description="In Ref. 1; BAB24660." evidence="7" ref="1">
    <original>F</original>
    <variation>L</variation>
    <location>
        <position position="371"/>
    </location>
</feature>
<organism>
    <name type="scientific">Mus musculus</name>
    <name type="common">Mouse</name>
    <dbReference type="NCBI Taxonomy" id="10090"/>
    <lineage>
        <taxon>Eukaryota</taxon>
        <taxon>Metazoa</taxon>
        <taxon>Chordata</taxon>
        <taxon>Craniata</taxon>
        <taxon>Vertebrata</taxon>
        <taxon>Euteleostomi</taxon>
        <taxon>Mammalia</taxon>
        <taxon>Eutheria</taxon>
        <taxon>Euarchontoglires</taxon>
        <taxon>Glires</taxon>
        <taxon>Rodentia</taxon>
        <taxon>Myomorpha</taxon>
        <taxon>Muroidea</taxon>
        <taxon>Muridae</taxon>
        <taxon>Murinae</taxon>
        <taxon>Mus</taxon>
        <taxon>Mus</taxon>
    </lineage>
</organism>
<reference key="1">
    <citation type="journal article" date="2005" name="Science">
        <title>The transcriptional landscape of the mammalian genome.</title>
        <authorList>
            <person name="Carninci P."/>
            <person name="Kasukawa T."/>
            <person name="Katayama S."/>
            <person name="Gough J."/>
            <person name="Frith M.C."/>
            <person name="Maeda N."/>
            <person name="Oyama R."/>
            <person name="Ravasi T."/>
            <person name="Lenhard B."/>
            <person name="Wells C."/>
            <person name="Kodzius R."/>
            <person name="Shimokawa K."/>
            <person name="Bajic V.B."/>
            <person name="Brenner S.E."/>
            <person name="Batalov S."/>
            <person name="Forrest A.R."/>
            <person name="Zavolan M."/>
            <person name="Davis M.J."/>
            <person name="Wilming L.G."/>
            <person name="Aidinis V."/>
            <person name="Allen J.E."/>
            <person name="Ambesi-Impiombato A."/>
            <person name="Apweiler R."/>
            <person name="Aturaliya R.N."/>
            <person name="Bailey T.L."/>
            <person name="Bansal M."/>
            <person name="Baxter L."/>
            <person name="Beisel K.W."/>
            <person name="Bersano T."/>
            <person name="Bono H."/>
            <person name="Chalk A.M."/>
            <person name="Chiu K.P."/>
            <person name="Choudhary V."/>
            <person name="Christoffels A."/>
            <person name="Clutterbuck D.R."/>
            <person name="Crowe M.L."/>
            <person name="Dalla E."/>
            <person name="Dalrymple B.P."/>
            <person name="de Bono B."/>
            <person name="Della Gatta G."/>
            <person name="di Bernardo D."/>
            <person name="Down T."/>
            <person name="Engstrom P."/>
            <person name="Fagiolini M."/>
            <person name="Faulkner G."/>
            <person name="Fletcher C.F."/>
            <person name="Fukushima T."/>
            <person name="Furuno M."/>
            <person name="Futaki S."/>
            <person name="Gariboldi M."/>
            <person name="Georgii-Hemming P."/>
            <person name="Gingeras T.R."/>
            <person name="Gojobori T."/>
            <person name="Green R.E."/>
            <person name="Gustincich S."/>
            <person name="Harbers M."/>
            <person name="Hayashi Y."/>
            <person name="Hensch T.K."/>
            <person name="Hirokawa N."/>
            <person name="Hill D."/>
            <person name="Huminiecki L."/>
            <person name="Iacono M."/>
            <person name="Ikeo K."/>
            <person name="Iwama A."/>
            <person name="Ishikawa T."/>
            <person name="Jakt M."/>
            <person name="Kanapin A."/>
            <person name="Katoh M."/>
            <person name="Kawasawa Y."/>
            <person name="Kelso J."/>
            <person name="Kitamura H."/>
            <person name="Kitano H."/>
            <person name="Kollias G."/>
            <person name="Krishnan S.P."/>
            <person name="Kruger A."/>
            <person name="Kummerfeld S.K."/>
            <person name="Kurochkin I.V."/>
            <person name="Lareau L.F."/>
            <person name="Lazarevic D."/>
            <person name="Lipovich L."/>
            <person name="Liu J."/>
            <person name="Liuni S."/>
            <person name="McWilliam S."/>
            <person name="Madan Babu M."/>
            <person name="Madera M."/>
            <person name="Marchionni L."/>
            <person name="Matsuda H."/>
            <person name="Matsuzawa S."/>
            <person name="Miki H."/>
            <person name="Mignone F."/>
            <person name="Miyake S."/>
            <person name="Morris K."/>
            <person name="Mottagui-Tabar S."/>
            <person name="Mulder N."/>
            <person name="Nakano N."/>
            <person name="Nakauchi H."/>
            <person name="Ng P."/>
            <person name="Nilsson R."/>
            <person name="Nishiguchi S."/>
            <person name="Nishikawa S."/>
            <person name="Nori F."/>
            <person name="Ohara O."/>
            <person name="Okazaki Y."/>
            <person name="Orlando V."/>
            <person name="Pang K.C."/>
            <person name="Pavan W.J."/>
            <person name="Pavesi G."/>
            <person name="Pesole G."/>
            <person name="Petrovsky N."/>
            <person name="Piazza S."/>
            <person name="Reed J."/>
            <person name="Reid J.F."/>
            <person name="Ring B.Z."/>
            <person name="Ringwald M."/>
            <person name="Rost B."/>
            <person name="Ruan Y."/>
            <person name="Salzberg S.L."/>
            <person name="Sandelin A."/>
            <person name="Schneider C."/>
            <person name="Schoenbach C."/>
            <person name="Sekiguchi K."/>
            <person name="Semple C.A."/>
            <person name="Seno S."/>
            <person name="Sessa L."/>
            <person name="Sheng Y."/>
            <person name="Shibata Y."/>
            <person name="Shimada H."/>
            <person name="Shimada K."/>
            <person name="Silva D."/>
            <person name="Sinclair B."/>
            <person name="Sperling S."/>
            <person name="Stupka E."/>
            <person name="Sugiura K."/>
            <person name="Sultana R."/>
            <person name="Takenaka Y."/>
            <person name="Taki K."/>
            <person name="Tammoja K."/>
            <person name="Tan S.L."/>
            <person name="Tang S."/>
            <person name="Taylor M.S."/>
            <person name="Tegner J."/>
            <person name="Teichmann S.A."/>
            <person name="Ueda H.R."/>
            <person name="van Nimwegen E."/>
            <person name="Verardo R."/>
            <person name="Wei C.L."/>
            <person name="Yagi K."/>
            <person name="Yamanishi H."/>
            <person name="Zabarovsky E."/>
            <person name="Zhu S."/>
            <person name="Zimmer A."/>
            <person name="Hide W."/>
            <person name="Bult C."/>
            <person name="Grimmond S.M."/>
            <person name="Teasdale R.D."/>
            <person name="Liu E.T."/>
            <person name="Brusic V."/>
            <person name="Quackenbush J."/>
            <person name="Wahlestedt C."/>
            <person name="Mattick J.S."/>
            <person name="Hume D.A."/>
            <person name="Kai C."/>
            <person name="Sasaki D."/>
            <person name="Tomaru Y."/>
            <person name="Fukuda S."/>
            <person name="Kanamori-Katayama M."/>
            <person name="Suzuki M."/>
            <person name="Aoki J."/>
            <person name="Arakawa T."/>
            <person name="Iida J."/>
            <person name="Imamura K."/>
            <person name="Itoh M."/>
            <person name="Kato T."/>
            <person name="Kawaji H."/>
            <person name="Kawagashira N."/>
            <person name="Kawashima T."/>
            <person name="Kojima M."/>
            <person name="Kondo S."/>
            <person name="Konno H."/>
            <person name="Nakano K."/>
            <person name="Ninomiya N."/>
            <person name="Nishio T."/>
            <person name="Okada M."/>
            <person name="Plessy C."/>
            <person name="Shibata K."/>
            <person name="Shiraki T."/>
            <person name="Suzuki S."/>
            <person name="Tagami M."/>
            <person name="Waki K."/>
            <person name="Watahiki A."/>
            <person name="Okamura-Oho Y."/>
            <person name="Suzuki H."/>
            <person name="Kawai J."/>
            <person name="Hayashizaki Y."/>
        </authorList>
    </citation>
    <scope>NUCLEOTIDE SEQUENCE [LARGE SCALE MRNA]</scope>
    <source>
        <strain>C57BL/6J</strain>
        <tissue>Testis</tissue>
    </source>
</reference>
<reference key="2">
    <citation type="journal article" date="2009" name="PLoS Biol.">
        <title>Lineage-specific biology revealed by a finished genome assembly of the mouse.</title>
        <authorList>
            <person name="Church D.M."/>
            <person name="Goodstadt L."/>
            <person name="Hillier L.W."/>
            <person name="Zody M.C."/>
            <person name="Goldstein S."/>
            <person name="She X."/>
            <person name="Bult C.J."/>
            <person name="Agarwala R."/>
            <person name="Cherry J.L."/>
            <person name="DiCuccio M."/>
            <person name="Hlavina W."/>
            <person name="Kapustin Y."/>
            <person name="Meric P."/>
            <person name="Maglott D."/>
            <person name="Birtle Z."/>
            <person name="Marques A.C."/>
            <person name="Graves T."/>
            <person name="Zhou S."/>
            <person name="Teague B."/>
            <person name="Potamousis K."/>
            <person name="Churas C."/>
            <person name="Place M."/>
            <person name="Herschleb J."/>
            <person name="Runnheim R."/>
            <person name="Forrest D."/>
            <person name="Amos-Landgraf J."/>
            <person name="Schwartz D.C."/>
            <person name="Cheng Z."/>
            <person name="Lindblad-Toh K."/>
            <person name="Eichler E.E."/>
            <person name="Ponting C.P."/>
        </authorList>
    </citation>
    <scope>NUCLEOTIDE SEQUENCE [LARGE SCALE GENOMIC DNA]</scope>
    <source>
        <strain>C57BL/6J</strain>
    </source>
</reference>
<reference key="3">
    <citation type="submission" date="2005-07" db="EMBL/GenBank/DDBJ databases">
        <authorList>
            <person name="Mural R.J."/>
            <person name="Adams M.D."/>
            <person name="Myers E.W."/>
            <person name="Smith H.O."/>
            <person name="Venter J.C."/>
        </authorList>
    </citation>
    <scope>NUCLEOTIDE SEQUENCE [LARGE SCALE GENOMIC DNA]</scope>
</reference>
<reference key="4">
    <citation type="journal article" date="2002" name="Gene">
        <title>Identification of a novel calreticulin isoform (Crt2) in human and mouse.</title>
        <authorList>
            <person name="Persson S."/>
            <person name="Rosenquist M."/>
            <person name="Sommarin M."/>
        </authorList>
    </citation>
    <scope>IDENTIFICATION</scope>
    <scope>TISSUE SPECIFICITY</scope>
</reference>
<reference key="5">
    <citation type="journal article" date="2006" name="J. Biol. Chem.">
        <title>Age-specific CUGBP1-eIF2 complex increases translation of CCAAT/enhancer-binding protein beta in old liver.</title>
        <authorList>
            <person name="Timchenko L.T."/>
            <person name="Salisbury E."/>
            <person name="Wang G.-L."/>
            <person name="Nguyen H."/>
            <person name="Albrecht J.H."/>
            <person name="Hershey J.W."/>
            <person name="Timchenko N.A."/>
        </authorList>
    </citation>
    <scope>IDENTIFICATION IN AN EIF2 COMPLEX WITH EIF2S1; EIF2S2; CALR; CELF1; HSPA5 AND HSP90B1</scope>
</reference>
<reference key="6">
    <citation type="journal article" date="2010" name="Cell">
        <title>A tissue-specific atlas of mouse protein phosphorylation and expression.</title>
        <authorList>
            <person name="Huttlin E.L."/>
            <person name="Jedrychowski M.P."/>
            <person name="Elias J.E."/>
            <person name="Goswami T."/>
            <person name="Rad R."/>
            <person name="Beausoleil S.A."/>
            <person name="Villen J."/>
            <person name="Haas W."/>
            <person name="Sowa M.E."/>
            <person name="Gygi S.P."/>
        </authorList>
    </citation>
    <scope>IDENTIFICATION BY MASS SPECTROMETRY [LARGE SCALE ANALYSIS]</scope>
    <source>
        <tissue>Testis</tissue>
    </source>
</reference>
<reference key="7">
    <citation type="journal article" date="2011" name="J. Biol. Chem.">
        <title>Calsperin is a testis-specific chaperone required for sperm fertility.</title>
        <authorList>
            <person name="Ikawa M."/>
            <person name="Tokuhiro K."/>
            <person name="Yamaguchi R."/>
            <person name="Benham A.M."/>
            <person name="Tamura T."/>
            <person name="Wada I."/>
            <person name="Satouh Y."/>
            <person name="Inoue N."/>
            <person name="Okabe M."/>
        </authorList>
    </citation>
    <scope>FUNCTION</scope>
    <scope>TISSUE SPECIFICITY</scope>
    <scope>DISRUPTION PHENOTYPE</scope>
</reference>